<name>ZSWM1_HUMAN</name>
<sequence>MLERLKAPWSAALQRKYFDLGIWTAPISPMALTMLNGLLIKDSSPPMLLHQVNKTAQLDTFNYQSCFMQSVFDHFPEILFIHRTYNPRGKVLYTFLVDGPRVQLEGHLARAVYFAIPAKEDTEGLAQMFQVFKKFNPAWERVCTILVDPHFLPLPILAMEFPTAEVLLSAFHICKFLQAKFYQLSLERPVERLLLTSLQSTMCSATAGNLRKLYTLLSNCIPPAKLPELHSHWLLNDRIWLAHRWRSRAESSHYFQSLEVTTHILSQFFGTTPSEKQGMASLFRYMQQNSADKANFNQGLCAQNNHAPSDTIPESPKLEQLVESHIQHSLNAICTGPAAQLCLGELAVVQKSTHLIGSGSEKMNIQILEDTHKVQPQPPASCSCYFNQAFHLPCRHILAMLSARRQVLQPDMLPAQWTAGCATSLDSILGSKWSETLDKHLAVTHLTEEVGQLLQHCTKEEFERRYSTLRELADSWIGPYEQVQL</sequence>
<accession>Q9BR11</accession>
<accession>Q5JZH2</accession>
<accession>Q9BR12</accession>
<accession>Q9BV30</accession>
<keyword id="KW-0479">Metal-binding</keyword>
<keyword id="KW-1267">Proteomics identification</keyword>
<keyword id="KW-1185">Reference proteome</keyword>
<keyword id="KW-0862">Zinc</keyword>
<keyword id="KW-0863">Zinc-finger</keyword>
<gene>
    <name type="primary">ZSWIM1</name>
    <name type="synonym">C20orf162</name>
</gene>
<reference key="1">
    <citation type="journal article" date="2001" name="Nature">
        <title>The DNA sequence and comparative analysis of human chromosome 20.</title>
        <authorList>
            <person name="Deloukas P."/>
            <person name="Matthews L.H."/>
            <person name="Ashurst J.L."/>
            <person name="Burton J."/>
            <person name="Gilbert J.G.R."/>
            <person name="Jones M."/>
            <person name="Stavrides G."/>
            <person name="Almeida J.P."/>
            <person name="Babbage A.K."/>
            <person name="Bagguley C.L."/>
            <person name="Bailey J."/>
            <person name="Barlow K.F."/>
            <person name="Bates K.N."/>
            <person name="Beard L.M."/>
            <person name="Beare D.M."/>
            <person name="Beasley O.P."/>
            <person name="Bird C.P."/>
            <person name="Blakey S.E."/>
            <person name="Bridgeman A.M."/>
            <person name="Brown A.J."/>
            <person name="Buck D."/>
            <person name="Burrill W.D."/>
            <person name="Butler A.P."/>
            <person name="Carder C."/>
            <person name="Carter N.P."/>
            <person name="Chapman J.C."/>
            <person name="Clamp M."/>
            <person name="Clark G."/>
            <person name="Clark L.N."/>
            <person name="Clark S.Y."/>
            <person name="Clee C.M."/>
            <person name="Clegg S."/>
            <person name="Cobley V.E."/>
            <person name="Collier R.E."/>
            <person name="Connor R.E."/>
            <person name="Corby N.R."/>
            <person name="Coulson A."/>
            <person name="Coville G.J."/>
            <person name="Deadman R."/>
            <person name="Dhami P.D."/>
            <person name="Dunn M."/>
            <person name="Ellington A.G."/>
            <person name="Frankland J.A."/>
            <person name="Fraser A."/>
            <person name="French L."/>
            <person name="Garner P."/>
            <person name="Grafham D.V."/>
            <person name="Griffiths C."/>
            <person name="Griffiths M.N.D."/>
            <person name="Gwilliam R."/>
            <person name="Hall R.E."/>
            <person name="Hammond S."/>
            <person name="Harley J.L."/>
            <person name="Heath P.D."/>
            <person name="Ho S."/>
            <person name="Holden J.L."/>
            <person name="Howden P.J."/>
            <person name="Huckle E."/>
            <person name="Hunt A.R."/>
            <person name="Hunt S.E."/>
            <person name="Jekosch K."/>
            <person name="Johnson C.M."/>
            <person name="Johnson D."/>
            <person name="Kay M.P."/>
            <person name="Kimberley A.M."/>
            <person name="King A."/>
            <person name="Knights A."/>
            <person name="Laird G.K."/>
            <person name="Lawlor S."/>
            <person name="Lehvaeslaiho M.H."/>
            <person name="Leversha M.A."/>
            <person name="Lloyd C."/>
            <person name="Lloyd D.M."/>
            <person name="Lovell J.D."/>
            <person name="Marsh V.L."/>
            <person name="Martin S.L."/>
            <person name="McConnachie L.J."/>
            <person name="McLay K."/>
            <person name="McMurray A.A."/>
            <person name="Milne S.A."/>
            <person name="Mistry D."/>
            <person name="Moore M.J.F."/>
            <person name="Mullikin J.C."/>
            <person name="Nickerson T."/>
            <person name="Oliver K."/>
            <person name="Parker A."/>
            <person name="Patel R."/>
            <person name="Pearce T.A.V."/>
            <person name="Peck A.I."/>
            <person name="Phillimore B.J.C.T."/>
            <person name="Prathalingam S.R."/>
            <person name="Plumb R.W."/>
            <person name="Ramsay H."/>
            <person name="Rice C.M."/>
            <person name="Ross M.T."/>
            <person name="Scott C.E."/>
            <person name="Sehra H.K."/>
            <person name="Shownkeen R."/>
            <person name="Sims S."/>
            <person name="Skuce C.D."/>
            <person name="Smith M.L."/>
            <person name="Soderlund C."/>
            <person name="Steward C.A."/>
            <person name="Sulston J.E."/>
            <person name="Swann R.M."/>
            <person name="Sycamore N."/>
            <person name="Taylor R."/>
            <person name="Tee L."/>
            <person name="Thomas D.W."/>
            <person name="Thorpe A."/>
            <person name="Tracey A."/>
            <person name="Tromans A.C."/>
            <person name="Vaudin M."/>
            <person name="Wall M."/>
            <person name="Wallis J.M."/>
            <person name="Whitehead S.L."/>
            <person name="Whittaker P."/>
            <person name="Willey D.L."/>
            <person name="Williams L."/>
            <person name="Williams S.A."/>
            <person name="Wilming L."/>
            <person name="Wray P.W."/>
            <person name="Hubbard T."/>
            <person name="Durbin R.M."/>
            <person name="Bentley D.R."/>
            <person name="Beck S."/>
            <person name="Rogers J."/>
        </authorList>
    </citation>
    <scope>NUCLEOTIDE SEQUENCE [LARGE SCALE GENOMIC DNA]</scope>
</reference>
<reference key="2">
    <citation type="journal article" date="2004" name="Genome Res.">
        <title>The status, quality, and expansion of the NIH full-length cDNA project: the Mammalian Gene Collection (MGC).</title>
        <authorList>
            <consortium name="The MGC Project Team"/>
        </authorList>
    </citation>
    <scope>NUCLEOTIDE SEQUENCE [LARGE SCALE MRNA]</scope>
    <source>
        <tissue>Colon</tissue>
    </source>
</reference>
<proteinExistence type="evidence at protein level"/>
<dbReference type="EMBL" id="AL008726">
    <property type="status" value="NOT_ANNOTATED_CDS"/>
    <property type="molecule type" value="Genomic_DNA"/>
</dbReference>
<dbReference type="EMBL" id="BC001672">
    <property type="protein sequence ID" value="AAH01672.3"/>
    <property type="molecule type" value="mRNA"/>
</dbReference>
<dbReference type="EMBL" id="BC080525">
    <property type="protein sequence ID" value="AAH80525.2"/>
    <property type="molecule type" value="mRNA"/>
</dbReference>
<dbReference type="CCDS" id="CCDS13382.2"/>
<dbReference type="RefSeq" id="NP_542170.3">
    <property type="nucleotide sequence ID" value="NM_080603.4"/>
</dbReference>
<dbReference type="RefSeq" id="XP_005260667.1">
    <property type="nucleotide sequence ID" value="XM_005260610.6"/>
</dbReference>
<dbReference type="RefSeq" id="XP_005260668.1">
    <property type="nucleotide sequence ID" value="XM_005260611.5"/>
</dbReference>
<dbReference type="RefSeq" id="XP_011527402.1">
    <property type="nucleotide sequence ID" value="XM_011529100.3"/>
</dbReference>
<dbReference type="RefSeq" id="XP_054180178.1">
    <property type="nucleotide sequence ID" value="XM_054324203.1"/>
</dbReference>
<dbReference type="RefSeq" id="XP_054180179.1">
    <property type="nucleotide sequence ID" value="XM_054324204.1"/>
</dbReference>
<dbReference type="RefSeq" id="XP_054180180.1">
    <property type="nucleotide sequence ID" value="XM_054324205.1"/>
</dbReference>
<dbReference type="BioGRID" id="124678">
    <property type="interactions" value="3"/>
</dbReference>
<dbReference type="FunCoup" id="Q9BR11">
    <property type="interactions" value="109"/>
</dbReference>
<dbReference type="IntAct" id="Q9BR11">
    <property type="interactions" value="4"/>
</dbReference>
<dbReference type="MINT" id="Q9BR11"/>
<dbReference type="STRING" id="9606.ENSP00000361601"/>
<dbReference type="GlyGen" id="Q9BR11">
    <property type="glycosylation" value="1 site, 1 O-linked glycan (1 site)"/>
</dbReference>
<dbReference type="iPTMnet" id="Q9BR11"/>
<dbReference type="PhosphoSitePlus" id="Q9BR11"/>
<dbReference type="BioMuta" id="ZSWIM1"/>
<dbReference type="DMDM" id="73920980"/>
<dbReference type="jPOST" id="Q9BR11"/>
<dbReference type="MassIVE" id="Q9BR11"/>
<dbReference type="PaxDb" id="9606-ENSP00000361601"/>
<dbReference type="PeptideAtlas" id="Q9BR11"/>
<dbReference type="ProteomicsDB" id="78737"/>
<dbReference type="Antibodypedia" id="27817">
    <property type="antibodies" value="79 antibodies from 16 providers"/>
</dbReference>
<dbReference type="DNASU" id="90204"/>
<dbReference type="Ensembl" id="ENST00000372523.1">
    <property type="protein sequence ID" value="ENSP00000361601.1"/>
    <property type="gene ID" value="ENSG00000168612.5"/>
</dbReference>
<dbReference type="GeneID" id="90204"/>
<dbReference type="KEGG" id="hsa:90204"/>
<dbReference type="MANE-Select" id="ENST00000372523.1">
    <property type="protein sequence ID" value="ENSP00000361601.1"/>
    <property type="RefSeq nucleotide sequence ID" value="NM_080603.5"/>
    <property type="RefSeq protein sequence ID" value="NP_542170.3"/>
</dbReference>
<dbReference type="UCSC" id="uc010ghi.4">
    <property type="organism name" value="human"/>
</dbReference>
<dbReference type="AGR" id="HGNC:16155"/>
<dbReference type="CTD" id="90204"/>
<dbReference type="GeneCards" id="ZSWIM1"/>
<dbReference type="HGNC" id="HGNC:16155">
    <property type="gene designation" value="ZSWIM1"/>
</dbReference>
<dbReference type="HPA" id="ENSG00000168612">
    <property type="expression patterns" value="Low tissue specificity"/>
</dbReference>
<dbReference type="neXtProt" id="NX_Q9BR11"/>
<dbReference type="OpenTargets" id="ENSG00000168612"/>
<dbReference type="PharmGKB" id="PA25704"/>
<dbReference type="VEuPathDB" id="HostDB:ENSG00000168612"/>
<dbReference type="eggNOG" id="ENOG502RNJT">
    <property type="taxonomic scope" value="Eukaryota"/>
</dbReference>
<dbReference type="GeneTree" id="ENSGT00390000017273"/>
<dbReference type="HOGENOM" id="CLU_563302_0_0_1"/>
<dbReference type="InParanoid" id="Q9BR11"/>
<dbReference type="OMA" id="CHFSQTF"/>
<dbReference type="OrthoDB" id="124789at2759"/>
<dbReference type="PAN-GO" id="Q9BR11">
    <property type="GO annotations" value="0 GO annotations based on evolutionary models"/>
</dbReference>
<dbReference type="PhylomeDB" id="Q9BR11"/>
<dbReference type="TreeFam" id="TF335703"/>
<dbReference type="PathwayCommons" id="Q9BR11"/>
<dbReference type="SignaLink" id="Q9BR11"/>
<dbReference type="BioGRID-ORCS" id="90204">
    <property type="hits" value="11 hits in 1159 CRISPR screens"/>
</dbReference>
<dbReference type="ChiTaRS" id="ZSWIM1">
    <property type="organism name" value="human"/>
</dbReference>
<dbReference type="GenomeRNAi" id="90204"/>
<dbReference type="Pharos" id="Q9BR11">
    <property type="development level" value="Tdark"/>
</dbReference>
<dbReference type="PRO" id="PR:Q9BR11"/>
<dbReference type="Proteomes" id="UP000005640">
    <property type="component" value="Chromosome 20"/>
</dbReference>
<dbReference type="RNAct" id="Q9BR11">
    <property type="molecule type" value="protein"/>
</dbReference>
<dbReference type="Bgee" id="ENSG00000168612">
    <property type="expression patterns" value="Expressed in pancreatic ductal cell and 108 other cell types or tissues"/>
</dbReference>
<dbReference type="GO" id="GO:0005634">
    <property type="term" value="C:nucleus"/>
    <property type="evidence" value="ECO:0007669"/>
    <property type="project" value="Ensembl"/>
</dbReference>
<dbReference type="GO" id="GO:0008270">
    <property type="term" value="F:zinc ion binding"/>
    <property type="evidence" value="ECO:0007669"/>
    <property type="project" value="UniProtKB-KW"/>
</dbReference>
<dbReference type="InterPro" id="IPR052579">
    <property type="entry name" value="Zinc_finger_SWIM"/>
</dbReference>
<dbReference type="InterPro" id="IPR007527">
    <property type="entry name" value="Znf_SWIM"/>
</dbReference>
<dbReference type="InterPro" id="IPR048326">
    <property type="entry name" value="ZSWIM1-3_helical"/>
</dbReference>
<dbReference type="InterPro" id="IPR048324">
    <property type="entry name" value="ZSWIM1-3_RNaseH-like"/>
</dbReference>
<dbReference type="InterPro" id="IPR045563">
    <property type="entry name" value="ZSWIM1/3_C"/>
</dbReference>
<dbReference type="PANTHER" id="PTHR31569">
    <property type="entry name" value="SWIM-TYPE DOMAIN-CONTAINING PROTEIN"/>
    <property type="match status" value="1"/>
</dbReference>
<dbReference type="PANTHER" id="PTHR31569:SF0">
    <property type="entry name" value="ZINC FINGER SWIM DOMAIN-CONTAINING PROTEIN 1"/>
    <property type="match status" value="1"/>
</dbReference>
<dbReference type="Pfam" id="PF04434">
    <property type="entry name" value="SWIM"/>
    <property type="match status" value="1"/>
</dbReference>
<dbReference type="Pfam" id="PF19286">
    <property type="entry name" value="ZSWIM1-3_C"/>
    <property type="match status" value="1"/>
</dbReference>
<dbReference type="Pfam" id="PF21600">
    <property type="entry name" value="ZSWIM1-3_helical"/>
    <property type="match status" value="1"/>
</dbReference>
<dbReference type="Pfam" id="PF21056">
    <property type="entry name" value="ZSWIM1-3_RNaseH-like"/>
    <property type="match status" value="1"/>
</dbReference>
<dbReference type="PROSITE" id="PS50966">
    <property type="entry name" value="ZF_SWIM"/>
    <property type="match status" value="1"/>
</dbReference>
<feature type="chain" id="PRO_0000223095" description="Zinc finger SWIM domain-containing protein 1">
    <location>
        <begin position="1"/>
        <end position="485"/>
    </location>
</feature>
<feature type="zinc finger region" description="SWIM-type" evidence="1">
    <location>
        <begin position="363"/>
        <end position="405"/>
    </location>
</feature>
<feature type="sequence variant" id="VAR_020445" description="In dbSNP:rs3746500.">
    <original>R</original>
    <variation>Q</variation>
    <location>
        <position position="101"/>
    </location>
</feature>
<evidence type="ECO:0000255" key="1">
    <source>
        <dbReference type="PROSITE-ProRule" id="PRU00325"/>
    </source>
</evidence>
<organism>
    <name type="scientific">Homo sapiens</name>
    <name type="common">Human</name>
    <dbReference type="NCBI Taxonomy" id="9606"/>
    <lineage>
        <taxon>Eukaryota</taxon>
        <taxon>Metazoa</taxon>
        <taxon>Chordata</taxon>
        <taxon>Craniata</taxon>
        <taxon>Vertebrata</taxon>
        <taxon>Euteleostomi</taxon>
        <taxon>Mammalia</taxon>
        <taxon>Eutheria</taxon>
        <taxon>Euarchontoglires</taxon>
        <taxon>Primates</taxon>
        <taxon>Haplorrhini</taxon>
        <taxon>Catarrhini</taxon>
        <taxon>Hominidae</taxon>
        <taxon>Homo</taxon>
    </lineage>
</organism>
<protein>
    <recommendedName>
        <fullName>Zinc finger SWIM domain-containing protein 1</fullName>
    </recommendedName>
</protein>